<gene>
    <name evidence="1" type="primary">tusB</name>
    <name type="ordered locus">SeAg_B3646</name>
</gene>
<proteinExistence type="inferred from homology"/>
<dbReference type="EMBL" id="CP001138">
    <property type="protein sequence ID" value="ACH51612.1"/>
    <property type="molecule type" value="Genomic_DNA"/>
</dbReference>
<dbReference type="RefSeq" id="WP_000903398.1">
    <property type="nucleotide sequence ID" value="NC_011149.1"/>
</dbReference>
<dbReference type="SMR" id="B5F8G1"/>
<dbReference type="KEGG" id="sea:SeAg_B3646"/>
<dbReference type="HOGENOM" id="CLU_166087_2_1_6"/>
<dbReference type="Proteomes" id="UP000008819">
    <property type="component" value="Chromosome"/>
</dbReference>
<dbReference type="GO" id="GO:1990228">
    <property type="term" value="C:sulfurtransferase complex"/>
    <property type="evidence" value="ECO:0007669"/>
    <property type="project" value="TreeGrafter"/>
</dbReference>
<dbReference type="GO" id="GO:0002143">
    <property type="term" value="P:tRNA wobble position uridine thiolation"/>
    <property type="evidence" value="ECO:0007669"/>
    <property type="project" value="InterPro"/>
</dbReference>
<dbReference type="FunFam" id="3.40.1260.10:FF:000002">
    <property type="entry name" value="Sulfurtransferase TusB"/>
    <property type="match status" value="1"/>
</dbReference>
<dbReference type="Gene3D" id="3.40.1260.10">
    <property type="entry name" value="DsrEFH-like"/>
    <property type="match status" value="1"/>
</dbReference>
<dbReference type="HAMAP" id="MF_01564">
    <property type="entry name" value="Thiourid_synth_B"/>
    <property type="match status" value="1"/>
</dbReference>
<dbReference type="InterPro" id="IPR027396">
    <property type="entry name" value="DsrEFH-like"/>
</dbReference>
<dbReference type="InterPro" id="IPR023526">
    <property type="entry name" value="Sulphur_relay_TusB"/>
</dbReference>
<dbReference type="InterPro" id="IPR007215">
    <property type="entry name" value="Sulphur_relay_TusB/DsrH"/>
</dbReference>
<dbReference type="NCBIfam" id="NF010035">
    <property type="entry name" value="PRK13510.1"/>
    <property type="match status" value="1"/>
</dbReference>
<dbReference type="NCBIfam" id="TIGR03011">
    <property type="entry name" value="sulf_tusB_dsrH"/>
    <property type="match status" value="1"/>
</dbReference>
<dbReference type="PANTHER" id="PTHR37526">
    <property type="entry name" value="PROTEIN TUSB"/>
    <property type="match status" value="1"/>
</dbReference>
<dbReference type="PANTHER" id="PTHR37526:SF1">
    <property type="entry name" value="PROTEIN TUSB"/>
    <property type="match status" value="1"/>
</dbReference>
<dbReference type="Pfam" id="PF04077">
    <property type="entry name" value="DsrH"/>
    <property type="match status" value="1"/>
</dbReference>
<dbReference type="SUPFAM" id="SSF75169">
    <property type="entry name" value="DsrEFH-like"/>
    <property type="match status" value="1"/>
</dbReference>
<keyword id="KW-0963">Cytoplasm</keyword>
<keyword id="KW-0819">tRNA processing</keyword>
<reference key="1">
    <citation type="journal article" date="2011" name="J. Bacteriol.">
        <title>Comparative genomics of 28 Salmonella enterica isolates: evidence for CRISPR-mediated adaptive sublineage evolution.</title>
        <authorList>
            <person name="Fricke W.F."/>
            <person name="Mammel M.K."/>
            <person name="McDermott P.F."/>
            <person name="Tartera C."/>
            <person name="White D.G."/>
            <person name="Leclerc J.E."/>
            <person name="Ravel J."/>
            <person name="Cebula T.A."/>
        </authorList>
    </citation>
    <scope>NUCLEOTIDE SEQUENCE [LARGE SCALE GENOMIC DNA]</scope>
    <source>
        <strain>SL483</strain>
    </source>
</reference>
<accession>B5F8G1</accession>
<evidence type="ECO:0000255" key="1">
    <source>
        <dbReference type="HAMAP-Rule" id="MF_01564"/>
    </source>
</evidence>
<feature type="chain" id="PRO_1000189842" description="Protein TusB">
    <location>
        <begin position="1"/>
        <end position="95"/>
    </location>
</feature>
<sequence>MLHTLPHCASGVDFPALLRLLKEGDALLLLQDGVTVAIEGNRFLESLRDAPITVYALKEDIDARGLGGQISDSVVRVDYTEFVRLTVKYANQMAW</sequence>
<comment type="function">
    <text evidence="1">Part of a sulfur-relay system required for 2-thiolation of 5-methylaminomethyl-2-thiouridine (mnm(5)s(2)U) at tRNA wobble positions.</text>
</comment>
<comment type="subunit">
    <text evidence="1">Heterohexamer, formed by a dimer of trimers. The hexameric TusBCD complex contains 2 copies each of TusB, TusC and TusD. The TusBCD complex interacts with TusE.</text>
</comment>
<comment type="subcellular location">
    <subcellularLocation>
        <location evidence="1">Cytoplasm</location>
    </subcellularLocation>
</comment>
<comment type="similarity">
    <text evidence="1">Belongs to the DsrH/TusB family.</text>
</comment>
<organism>
    <name type="scientific">Salmonella agona (strain SL483)</name>
    <dbReference type="NCBI Taxonomy" id="454166"/>
    <lineage>
        <taxon>Bacteria</taxon>
        <taxon>Pseudomonadati</taxon>
        <taxon>Pseudomonadota</taxon>
        <taxon>Gammaproteobacteria</taxon>
        <taxon>Enterobacterales</taxon>
        <taxon>Enterobacteriaceae</taxon>
        <taxon>Salmonella</taxon>
    </lineage>
</organism>
<name>TUSB_SALA4</name>
<protein>
    <recommendedName>
        <fullName evidence="1">Protein TusB</fullName>
    </recommendedName>
    <alternativeName>
        <fullName evidence="1">tRNA 2-thiouridine synthesizing protein B</fullName>
    </alternativeName>
</protein>